<comment type="similarity">
    <text evidence="2">Belongs to the 4-oxalocrotonate tautomerase family.</text>
</comment>
<reference key="1">
    <citation type="journal article" date="2002" name="Nature">
        <title>Genome sequence of the plant pathogen Ralstonia solanacearum.</title>
        <authorList>
            <person name="Salanoubat M."/>
            <person name="Genin S."/>
            <person name="Artiguenave F."/>
            <person name="Gouzy J."/>
            <person name="Mangenot S."/>
            <person name="Arlat M."/>
            <person name="Billault A."/>
            <person name="Brottier P."/>
            <person name="Camus J.-C."/>
            <person name="Cattolico L."/>
            <person name="Chandler M."/>
            <person name="Choisne N."/>
            <person name="Claudel-Renard C."/>
            <person name="Cunnac S."/>
            <person name="Demange N."/>
            <person name="Gaspin C."/>
            <person name="Lavie M."/>
            <person name="Moisan A."/>
            <person name="Robert C."/>
            <person name="Saurin W."/>
            <person name="Schiex T."/>
            <person name="Siguier P."/>
            <person name="Thebault P."/>
            <person name="Whalen M."/>
            <person name="Wincker P."/>
            <person name="Levy M."/>
            <person name="Weissenbach J."/>
            <person name="Boucher C.A."/>
        </authorList>
    </citation>
    <scope>NUCLEOTIDE SEQUENCE [LARGE SCALE GENOMIC DNA]</scope>
    <source>
        <strain>ATCC BAA-1114 / GMI1000</strain>
    </source>
</reference>
<proteinExistence type="inferred from homology"/>
<dbReference type="EC" id="5.3.2.-"/>
<dbReference type="EMBL" id="AL646053">
    <property type="protein sequence ID" value="CAD18302.1"/>
    <property type="molecule type" value="Genomic_DNA"/>
</dbReference>
<dbReference type="RefSeq" id="WP_011004439.1">
    <property type="nucleotide sequence ID" value="NC_003296.1"/>
</dbReference>
<dbReference type="SMR" id="Q8XQR9"/>
<dbReference type="STRING" id="267608.RSp1151"/>
<dbReference type="EnsemblBacteria" id="CAD18302">
    <property type="protein sequence ID" value="CAD18302"/>
    <property type="gene ID" value="RSp1151"/>
</dbReference>
<dbReference type="KEGG" id="rso:RSp1151"/>
<dbReference type="eggNOG" id="COG1942">
    <property type="taxonomic scope" value="Bacteria"/>
</dbReference>
<dbReference type="HOGENOM" id="CLU_148073_3_0_4"/>
<dbReference type="Proteomes" id="UP000001436">
    <property type="component" value="Plasmid megaplasmid Rsp"/>
</dbReference>
<dbReference type="GO" id="GO:0016853">
    <property type="term" value="F:isomerase activity"/>
    <property type="evidence" value="ECO:0007669"/>
    <property type="project" value="UniProtKB-KW"/>
</dbReference>
<dbReference type="Gene3D" id="3.30.429.10">
    <property type="entry name" value="Macrophage Migration Inhibitory Factor"/>
    <property type="match status" value="1"/>
</dbReference>
<dbReference type="InterPro" id="IPR004370">
    <property type="entry name" value="4-OT-like_dom"/>
</dbReference>
<dbReference type="InterPro" id="IPR014347">
    <property type="entry name" value="Tautomerase/MIF_sf"/>
</dbReference>
<dbReference type="Pfam" id="PF01361">
    <property type="entry name" value="Tautomerase"/>
    <property type="match status" value="1"/>
</dbReference>
<dbReference type="SUPFAM" id="SSF55331">
    <property type="entry name" value="Tautomerase/MIF"/>
    <property type="match status" value="1"/>
</dbReference>
<geneLocation type="plasmid">
    <name>megaplasmid Rsp</name>
</geneLocation>
<keyword id="KW-0413">Isomerase</keyword>
<keyword id="KW-0614">Plasmid</keyword>
<keyword id="KW-1185">Reference proteome</keyword>
<evidence type="ECO:0000250" key="1"/>
<evidence type="ECO:0000305" key="2"/>
<accession>Q8XQR9</accession>
<protein>
    <recommendedName>
        <fullName>Probable tautomerase RSp1151</fullName>
        <ecNumber>5.3.2.-</ecNumber>
    </recommendedName>
</protein>
<sequence length="65" mass="7108">MPVVRVSWFEGKDAKAKKAVAAEITDSIVKHAGTDPKYIYVIFEDIKPSDWAGAGRLYGEEPGTP</sequence>
<gene>
    <name type="ordered locus">RSp1151</name>
    <name type="ORF">RS05436</name>
</gene>
<feature type="initiator methionine" description="Removed" evidence="1">
    <location>
        <position position="1"/>
    </location>
</feature>
<feature type="chain" id="PRO_0000209539" description="Probable tautomerase RSp1151">
    <location>
        <begin position="2"/>
        <end position="65"/>
    </location>
</feature>
<feature type="active site" description="Proton acceptor; via imino nitrogen" evidence="1">
    <location>
        <position position="2"/>
    </location>
</feature>
<organism>
    <name type="scientific">Ralstonia nicotianae (strain ATCC BAA-1114 / GMI1000)</name>
    <name type="common">Ralstonia solanacearum</name>
    <dbReference type="NCBI Taxonomy" id="267608"/>
    <lineage>
        <taxon>Bacteria</taxon>
        <taxon>Pseudomonadati</taxon>
        <taxon>Pseudomonadota</taxon>
        <taxon>Betaproteobacteria</taxon>
        <taxon>Burkholderiales</taxon>
        <taxon>Burkholderiaceae</taxon>
        <taxon>Ralstonia</taxon>
        <taxon>Ralstonia solanacearum species complex</taxon>
    </lineage>
</organism>
<name>Y4651_RALN1</name>